<dbReference type="EMBL" id="CP000439">
    <property type="protein sequence ID" value="ABK89157.1"/>
    <property type="molecule type" value="Genomic_DNA"/>
</dbReference>
<dbReference type="RefSeq" id="WP_003017803.1">
    <property type="nucleotide sequence ID" value="NZ_CP009633.1"/>
</dbReference>
<dbReference type="SMR" id="A0Q4J2"/>
<dbReference type="GeneID" id="75264252"/>
<dbReference type="KEGG" id="ftn:FTN_0248"/>
<dbReference type="KEGG" id="ftx:AW25_1794"/>
<dbReference type="BioCyc" id="FTUL401614:G1G75-259-MONOMER"/>
<dbReference type="Proteomes" id="UP000000762">
    <property type="component" value="Chromosome"/>
</dbReference>
<dbReference type="GO" id="GO:0022627">
    <property type="term" value="C:cytosolic small ribosomal subunit"/>
    <property type="evidence" value="ECO:0007669"/>
    <property type="project" value="TreeGrafter"/>
</dbReference>
<dbReference type="GO" id="GO:0019843">
    <property type="term" value="F:rRNA binding"/>
    <property type="evidence" value="ECO:0007669"/>
    <property type="project" value="UniProtKB-UniRule"/>
</dbReference>
<dbReference type="GO" id="GO:0003735">
    <property type="term" value="F:structural constituent of ribosome"/>
    <property type="evidence" value="ECO:0007669"/>
    <property type="project" value="InterPro"/>
</dbReference>
<dbReference type="GO" id="GO:0006412">
    <property type="term" value="P:translation"/>
    <property type="evidence" value="ECO:0007669"/>
    <property type="project" value="UniProtKB-UniRule"/>
</dbReference>
<dbReference type="CDD" id="cd00364">
    <property type="entry name" value="Ribosomal_uS17"/>
    <property type="match status" value="1"/>
</dbReference>
<dbReference type="Gene3D" id="2.40.50.140">
    <property type="entry name" value="Nucleic acid-binding proteins"/>
    <property type="match status" value="1"/>
</dbReference>
<dbReference type="HAMAP" id="MF_01345_B">
    <property type="entry name" value="Ribosomal_uS17_B"/>
    <property type="match status" value="1"/>
</dbReference>
<dbReference type="InterPro" id="IPR012340">
    <property type="entry name" value="NA-bd_OB-fold"/>
</dbReference>
<dbReference type="InterPro" id="IPR000266">
    <property type="entry name" value="Ribosomal_uS17"/>
</dbReference>
<dbReference type="InterPro" id="IPR019984">
    <property type="entry name" value="Ribosomal_uS17_bact/chlr"/>
</dbReference>
<dbReference type="NCBIfam" id="NF004123">
    <property type="entry name" value="PRK05610.1"/>
    <property type="match status" value="1"/>
</dbReference>
<dbReference type="NCBIfam" id="TIGR03635">
    <property type="entry name" value="uS17_bact"/>
    <property type="match status" value="1"/>
</dbReference>
<dbReference type="PANTHER" id="PTHR10744">
    <property type="entry name" value="40S RIBOSOMAL PROTEIN S11 FAMILY MEMBER"/>
    <property type="match status" value="1"/>
</dbReference>
<dbReference type="PANTHER" id="PTHR10744:SF1">
    <property type="entry name" value="SMALL RIBOSOMAL SUBUNIT PROTEIN US17M"/>
    <property type="match status" value="1"/>
</dbReference>
<dbReference type="Pfam" id="PF00366">
    <property type="entry name" value="Ribosomal_S17"/>
    <property type="match status" value="1"/>
</dbReference>
<dbReference type="PRINTS" id="PR00973">
    <property type="entry name" value="RIBOSOMALS17"/>
</dbReference>
<dbReference type="SUPFAM" id="SSF50249">
    <property type="entry name" value="Nucleic acid-binding proteins"/>
    <property type="match status" value="1"/>
</dbReference>
<gene>
    <name evidence="1" type="primary">rpsQ</name>
    <name type="ordered locus">FTN_0248</name>
</gene>
<evidence type="ECO:0000255" key="1">
    <source>
        <dbReference type="HAMAP-Rule" id="MF_01345"/>
    </source>
</evidence>
<evidence type="ECO:0000305" key="2"/>
<accession>A0Q4J2</accession>
<comment type="function">
    <text evidence="1">One of the primary rRNA binding proteins, it binds specifically to the 5'-end of 16S ribosomal RNA.</text>
</comment>
<comment type="subunit">
    <text evidence="1">Part of the 30S ribosomal subunit.</text>
</comment>
<comment type="similarity">
    <text evidence="1">Belongs to the universal ribosomal protein uS17 family.</text>
</comment>
<sequence>MSDKIRLLEGKVSSVAMDKTVVVRAERYVKHPLYGKFVKKTTKYYVHDENNECKEGDVIKFKETRPYSKTKKWCLVDIIHREK</sequence>
<protein>
    <recommendedName>
        <fullName evidence="1">Small ribosomal subunit protein uS17</fullName>
    </recommendedName>
    <alternativeName>
        <fullName evidence="2">30S ribosomal protein S17</fullName>
    </alternativeName>
</protein>
<organism>
    <name type="scientific">Francisella tularensis subsp. novicida (strain U112)</name>
    <dbReference type="NCBI Taxonomy" id="401614"/>
    <lineage>
        <taxon>Bacteria</taxon>
        <taxon>Pseudomonadati</taxon>
        <taxon>Pseudomonadota</taxon>
        <taxon>Gammaproteobacteria</taxon>
        <taxon>Thiotrichales</taxon>
        <taxon>Francisellaceae</taxon>
        <taxon>Francisella</taxon>
    </lineage>
</organism>
<feature type="chain" id="PRO_1000054954" description="Small ribosomal subunit protein uS17">
    <location>
        <begin position="1"/>
        <end position="83"/>
    </location>
</feature>
<reference key="1">
    <citation type="journal article" date="2007" name="Genome Biol.">
        <title>Comparison of Francisella tularensis genomes reveals evolutionary events associated with the emergence of human pathogenic strains.</title>
        <authorList>
            <person name="Rohmer L."/>
            <person name="Fong C."/>
            <person name="Abmayr S."/>
            <person name="Wasnick M."/>
            <person name="Larson Freeman T.J."/>
            <person name="Radey M."/>
            <person name="Guina T."/>
            <person name="Svensson K."/>
            <person name="Hayden H.S."/>
            <person name="Jacobs M."/>
            <person name="Gallagher L.A."/>
            <person name="Manoil C."/>
            <person name="Ernst R.K."/>
            <person name="Drees B."/>
            <person name="Buckley D."/>
            <person name="Haugen E."/>
            <person name="Bovee D."/>
            <person name="Zhou Y."/>
            <person name="Chang J."/>
            <person name="Levy R."/>
            <person name="Lim R."/>
            <person name="Gillett W."/>
            <person name="Guenthener D."/>
            <person name="Kang A."/>
            <person name="Shaffer S.A."/>
            <person name="Taylor G."/>
            <person name="Chen J."/>
            <person name="Gallis B."/>
            <person name="D'Argenio D.A."/>
            <person name="Forsman M."/>
            <person name="Olson M.V."/>
            <person name="Goodlett D.R."/>
            <person name="Kaul R."/>
            <person name="Miller S.I."/>
            <person name="Brittnacher M.J."/>
        </authorList>
    </citation>
    <scope>NUCLEOTIDE SEQUENCE [LARGE SCALE GENOMIC DNA]</scope>
    <source>
        <strain>U112</strain>
    </source>
</reference>
<proteinExistence type="inferred from homology"/>
<name>RS17_FRATN</name>
<keyword id="KW-0687">Ribonucleoprotein</keyword>
<keyword id="KW-0689">Ribosomal protein</keyword>
<keyword id="KW-0694">RNA-binding</keyword>
<keyword id="KW-0699">rRNA-binding</keyword>